<feature type="chain" id="PRO_0000143295" description="Maturase K">
    <location>
        <begin position="1"/>
        <end position="549"/>
    </location>
</feature>
<evidence type="ECO:0000255" key="1">
    <source>
        <dbReference type="HAMAP-Rule" id="MF_01390"/>
    </source>
</evidence>
<accession>Q52TG1</accession>
<reference key="1">
    <citation type="submission" date="2005-03" db="EMBL/GenBank/DDBJ databases">
        <title>Monocotyledons phylogeny based on three genes (matK, rbcL and 18S rDNA) sequences.</title>
        <authorList>
            <person name="Li X.X."/>
            <person name="Zhou Z.K."/>
        </authorList>
    </citation>
    <scope>NUCLEOTIDE SEQUENCE [GENOMIC DNA]</scope>
</reference>
<protein>
    <recommendedName>
        <fullName evidence="1">Maturase K</fullName>
    </recommendedName>
    <alternativeName>
        <fullName evidence="1">Intron maturase</fullName>
    </alternativeName>
</protein>
<dbReference type="EMBL" id="AY952427">
    <property type="protein sequence ID" value="AAX84506.1"/>
    <property type="molecule type" value="Genomic_DNA"/>
</dbReference>
<dbReference type="GO" id="GO:0009507">
    <property type="term" value="C:chloroplast"/>
    <property type="evidence" value="ECO:0007669"/>
    <property type="project" value="UniProtKB-SubCell"/>
</dbReference>
<dbReference type="GO" id="GO:0003723">
    <property type="term" value="F:RNA binding"/>
    <property type="evidence" value="ECO:0007669"/>
    <property type="project" value="UniProtKB-KW"/>
</dbReference>
<dbReference type="GO" id="GO:0006397">
    <property type="term" value="P:mRNA processing"/>
    <property type="evidence" value="ECO:0007669"/>
    <property type="project" value="UniProtKB-KW"/>
</dbReference>
<dbReference type="GO" id="GO:0008380">
    <property type="term" value="P:RNA splicing"/>
    <property type="evidence" value="ECO:0007669"/>
    <property type="project" value="UniProtKB-UniRule"/>
</dbReference>
<dbReference type="GO" id="GO:0008033">
    <property type="term" value="P:tRNA processing"/>
    <property type="evidence" value="ECO:0007669"/>
    <property type="project" value="UniProtKB-KW"/>
</dbReference>
<dbReference type="HAMAP" id="MF_01390">
    <property type="entry name" value="MatK"/>
    <property type="match status" value="1"/>
</dbReference>
<dbReference type="InterPro" id="IPR024937">
    <property type="entry name" value="Domain_X"/>
</dbReference>
<dbReference type="InterPro" id="IPR002866">
    <property type="entry name" value="Maturase_MatK"/>
</dbReference>
<dbReference type="InterPro" id="IPR024942">
    <property type="entry name" value="Maturase_MatK_N"/>
</dbReference>
<dbReference type="PANTHER" id="PTHR34811">
    <property type="entry name" value="MATURASE K"/>
    <property type="match status" value="1"/>
</dbReference>
<dbReference type="PANTHER" id="PTHR34811:SF1">
    <property type="entry name" value="MATURASE K"/>
    <property type="match status" value="1"/>
</dbReference>
<dbReference type="Pfam" id="PF01348">
    <property type="entry name" value="Intron_maturas2"/>
    <property type="match status" value="1"/>
</dbReference>
<dbReference type="Pfam" id="PF01824">
    <property type="entry name" value="MatK_N"/>
    <property type="match status" value="1"/>
</dbReference>
<geneLocation type="chloroplast"/>
<gene>
    <name evidence="1" type="primary">matK</name>
</gene>
<comment type="function">
    <text evidence="1">Usually encoded in the trnK tRNA gene intron. Probably assists in splicing its own and other chloroplast group II introns.</text>
</comment>
<comment type="subcellular location">
    <subcellularLocation>
        <location>Plastid</location>
        <location>Chloroplast</location>
    </subcellularLocation>
</comment>
<comment type="similarity">
    <text evidence="1">Belongs to the intron maturase 2 family. MatK subfamily.</text>
</comment>
<keyword id="KW-0150">Chloroplast</keyword>
<keyword id="KW-0507">mRNA processing</keyword>
<keyword id="KW-0934">Plastid</keyword>
<keyword id="KW-0694">RNA-binding</keyword>
<keyword id="KW-0819">tRNA processing</keyword>
<sequence>MEEFKKYFERDSYWQQHFLYPLLFQEYIYALAHIHNHGLNGSIFYESGEVLGYDNKSSLILVKRLILRMYQQNFLIHSSNESHQNGFVGHKNPFFSQMISGGFAVIVEIPFSLPSLIEKKKKEITKSQNLRSIHSIFPFLVDQFSHLNYVSDILIPYPIHLEILIQIIQSWIQDVPSLHLLRFFLYEYHNWNSFITRKKSLSTFGKENPRFFWFLYNSYVSEYESVFCFLRKHSSYLLSTSYRNLIERTHFYGKIEHLPVVCSNDFHKNLQLFKDPCMHYVRYQGKAILASKGTSLLMKKWKWYLVNFWECNFSFWFQPYRIHINQLSNSSFLFWGYFSIVLINPLPVRSQMLGYSCLIDNTLTKKLETLVPIIPLIGSLSKAKFCNVSGHPASKPIWTDLSDSDIIDRFVRICRTLSHYHSGSSKKQSLYRMKYILRLSCARTLARKHKTTVRAFFQRLGSGFLEEFFTEEQKFLSLVLPRTSLASGSDRVYKERIWYLDIIRINDLVNYSRLAMELCTGNITKRIEKRSKIAFLFSTDMLKCSCSGS</sequence>
<proteinExistence type="inferred from homology"/>
<name>MATK_ALBOL</name>
<organism>
    <name type="scientific">Albidella oligococca</name>
    <name type="common">Caldesia oligococca</name>
    <dbReference type="NCBI Taxonomy" id="2890917"/>
    <lineage>
        <taxon>Eukaryota</taxon>
        <taxon>Viridiplantae</taxon>
        <taxon>Streptophyta</taxon>
        <taxon>Embryophyta</taxon>
        <taxon>Tracheophyta</taxon>
        <taxon>Spermatophyta</taxon>
        <taxon>Magnoliopsida</taxon>
        <taxon>Liliopsida</taxon>
        <taxon>Alismataceae</taxon>
        <taxon>Albidella</taxon>
    </lineage>
</organism>